<accession>P29196</accession>
<accession>Q43841</accession>
<organism>
    <name type="scientific">Solanum tuberosum</name>
    <name type="common">Potato</name>
    <dbReference type="NCBI Taxonomy" id="4113"/>
    <lineage>
        <taxon>Eukaryota</taxon>
        <taxon>Viridiplantae</taxon>
        <taxon>Streptophyta</taxon>
        <taxon>Embryophyta</taxon>
        <taxon>Tracheophyta</taxon>
        <taxon>Spermatophyta</taxon>
        <taxon>Magnoliopsida</taxon>
        <taxon>eudicotyledons</taxon>
        <taxon>Gunneridae</taxon>
        <taxon>Pentapetalae</taxon>
        <taxon>asterids</taxon>
        <taxon>lamiids</taxon>
        <taxon>Solanales</taxon>
        <taxon>Solanaceae</taxon>
        <taxon>Solanoideae</taxon>
        <taxon>Solaneae</taxon>
        <taxon>Solanum</taxon>
    </lineage>
</organism>
<gene>
    <name type="primary">PPC1</name>
    <name type="synonym">PPC</name>
</gene>
<feature type="chain" id="PRO_0000166679" description="Phosphoenolpyruvate carboxylase">
    <location>
        <begin position="1"/>
        <end position="965"/>
    </location>
</feature>
<feature type="active site" evidence="1">
    <location>
        <position position="173"/>
    </location>
</feature>
<feature type="active site" evidence="1">
    <location>
        <position position="601"/>
    </location>
</feature>
<feature type="modified residue" description="Phosphoserine" evidence="1">
    <location>
        <position position="11"/>
    </location>
</feature>
<feature type="sequence conflict" description="In Ref. 3; CAA62469." evidence="2" ref="3">
    <original>D</original>
    <variation>E</variation>
    <location>
        <position position="7"/>
    </location>
</feature>
<keyword id="KW-0021">Allosteric enzyme</keyword>
<keyword id="KW-0120">Carbon dioxide fixation</keyword>
<keyword id="KW-0963">Cytoplasm</keyword>
<keyword id="KW-0456">Lyase</keyword>
<keyword id="KW-0460">Magnesium</keyword>
<keyword id="KW-0597">Phosphoprotein</keyword>
<keyword id="KW-0602">Photosynthesis</keyword>
<keyword id="KW-1185">Reference proteome</keyword>
<evidence type="ECO:0000250" key="1"/>
<evidence type="ECO:0000305" key="2"/>
<protein>
    <recommendedName>
        <fullName>Phosphoenolpyruvate carboxylase</fullName>
        <shortName>PEPC</shortName>
        <shortName>PEPCase</shortName>
        <ecNumber>4.1.1.31</ecNumber>
    </recommendedName>
</protein>
<proteinExistence type="evidence at transcript level"/>
<dbReference type="EC" id="4.1.1.31"/>
<dbReference type="EMBL" id="X67053">
    <property type="protein sequence ID" value="CAA47437.1"/>
    <property type="molecule type" value="mRNA"/>
</dbReference>
<dbReference type="EMBL" id="X90982">
    <property type="protein sequence ID" value="CAA62469.1"/>
    <property type="molecule type" value="Genomic_DNA"/>
</dbReference>
<dbReference type="PIR" id="S40304">
    <property type="entry name" value="S40304"/>
</dbReference>
<dbReference type="RefSeq" id="NP_001274942.1">
    <property type="nucleotide sequence ID" value="NM_001288013.1"/>
</dbReference>
<dbReference type="SMR" id="P29196"/>
<dbReference type="FunCoup" id="P29196">
    <property type="interactions" value="722"/>
</dbReference>
<dbReference type="STRING" id="4113.P29196"/>
<dbReference type="PaxDb" id="4113-PGSC0003DMT400039809"/>
<dbReference type="GeneID" id="102603323"/>
<dbReference type="KEGG" id="sot:102603323"/>
<dbReference type="eggNOG" id="ENOG502QPVS">
    <property type="taxonomic scope" value="Eukaryota"/>
</dbReference>
<dbReference type="InParanoid" id="P29196"/>
<dbReference type="OrthoDB" id="1365747at2759"/>
<dbReference type="UniPathway" id="UPA00321"/>
<dbReference type="Proteomes" id="UP000011115">
    <property type="component" value="Unassembled WGS sequence"/>
</dbReference>
<dbReference type="ExpressionAtlas" id="P29196">
    <property type="expression patterns" value="baseline"/>
</dbReference>
<dbReference type="GO" id="GO:0005829">
    <property type="term" value="C:cytosol"/>
    <property type="evidence" value="ECO:0000318"/>
    <property type="project" value="GO_Central"/>
</dbReference>
<dbReference type="GO" id="GO:0008964">
    <property type="term" value="F:phosphoenolpyruvate carboxylase activity"/>
    <property type="evidence" value="ECO:0000318"/>
    <property type="project" value="GO_Central"/>
</dbReference>
<dbReference type="GO" id="GO:0015977">
    <property type="term" value="P:carbon fixation"/>
    <property type="evidence" value="ECO:0007669"/>
    <property type="project" value="UniProtKB-KW"/>
</dbReference>
<dbReference type="GO" id="GO:0048366">
    <property type="term" value="P:leaf development"/>
    <property type="evidence" value="ECO:0000318"/>
    <property type="project" value="GO_Central"/>
</dbReference>
<dbReference type="GO" id="GO:0015979">
    <property type="term" value="P:photosynthesis"/>
    <property type="evidence" value="ECO:0007669"/>
    <property type="project" value="UniProtKB-KW"/>
</dbReference>
<dbReference type="GO" id="GO:0006099">
    <property type="term" value="P:tricarboxylic acid cycle"/>
    <property type="evidence" value="ECO:0007669"/>
    <property type="project" value="InterPro"/>
</dbReference>
<dbReference type="FunFam" id="1.20.1440.90:FF:000001">
    <property type="entry name" value="Phosphoenolpyruvate carboxylase 1"/>
    <property type="match status" value="1"/>
</dbReference>
<dbReference type="Gene3D" id="1.20.1440.90">
    <property type="entry name" value="Phosphoenolpyruvate/pyruvate domain"/>
    <property type="match status" value="1"/>
</dbReference>
<dbReference type="HAMAP" id="MF_00595">
    <property type="entry name" value="PEPcase_type1"/>
    <property type="match status" value="1"/>
</dbReference>
<dbReference type="InterPro" id="IPR021135">
    <property type="entry name" value="PEP_COase"/>
</dbReference>
<dbReference type="InterPro" id="IPR022805">
    <property type="entry name" value="PEP_COase_bac/pln-type"/>
</dbReference>
<dbReference type="InterPro" id="IPR018129">
    <property type="entry name" value="PEP_COase_Lys_AS"/>
</dbReference>
<dbReference type="InterPro" id="IPR033129">
    <property type="entry name" value="PEPCASE_His_AS"/>
</dbReference>
<dbReference type="InterPro" id="IPR015813">
    <property type="entry name" value="Pyrv/PenolPyrv_kinase-like_dom"/>
</dbReference>
<dbReference type="NCBIfam" id="NF000584">
    <property type="entry name" value="PRK00009.1"/>
    <property type="match status" value="1"/>
</dbReference>
<dbReference type="PANTHER" id="PTHR30523">
    <property type="entry name" value="PHOSPHOENOLPYRUVATE CARBOXYLASE"/>
    <property type="match status" value="1"/>
</dbReference>
<dbReference type="PANTHER" id="PTHR30523:SF33">
    <property type="entry name" value="PHOSPHOENOLPYRUVATE CARBOXYLASE 3"/>
    <property type="match status" value="1"/>
</dbReference>
<dbReference type="Pfam" id="PF00311">
    <property type="entry name" value="PEPcase"/>
    <property type="match status" value="1"/>
</dbReference>
<dbReference type="PRINTS" id="PR00150">
    <property type="entry name" value="PEPCARBXLASE"/>
</dbReference>
<dbReference type="SUPFAM" id="SSF51621">
    <property type="entry name" value="Phosphoenolpyruvate/pyruvate domain"/>
    <property type="match status" value="1"/>
</dbReference>
<dbReference type="PROSITE" id="PS00781">
    <property type="entry name" value="PEPCASE_1"/>
    <property type="match status" value="1"/>
</dbReference>
<dbReference type="PROSITE" id="PS00393">
    <property type="entry name" value="PEPCASE_2"/>
    <property type="match status" value="1"/>
</dbReference>
<reference key="1">
    <citation type="journal article" date="1993" name="Plant Mol. Biol.">
        <title>Cloning, sequence analysis and expression of a cDNA encoding active phosphoenolpyruvate carboxylase of the C3 plant Solanum tuberosum.</title>
        <authorList>
            <person name="Merkelbach S."/>
            <person name="Gehlen J."/>
            <person name="Denecke M."/>
            <person name="Hirsch H.-J."/>
            <person name="Kreuzaler F."/>
        </authorList>
    </citation>
    <scope>NUCLEOTIDE SEQUENCE [MRNA]</scope>
    <source>
        <tissue>Leaf</tissue>
    </source>
</reference>
<reference key="2">
    <citation type="submission" date="1995-07" db="EMBL/GenBank/DDBJ databases">
        <authorList>
            <person name="Merkelbach S."/>
        </authorList>
    </citation>
    <scope>SEQUENCE REVISION</scope>
</reference>
<reference key="3">
    <citation type="online journal article" date="1995" name="Plant Gene Register">
        <title>Genomic structure of a phosphoenolpyruvate carboxylase gene from potato (Solanum tuberosum).</title>
        <authorList>
            <person name="Panstruga R."/>
            <person name="Seiler A."/>
            <person name="Hirsch H.-J."/>
            <person name="Kreuzaler F."/>
        </authorList>
        <locator>PGR95-086</locator>
    </citation>
    <scope>NUCLEOTIDE SEQUENCE [GENOMIC DNA]</scope>
    <source>
        <strain>cv. Desiree</strain>
        <tissue>Leaf</tissue>
    </source>
</reference>
<sequence>MTTRNLDKLASIDAQLRQLVPAKVSEDDKLVEYDALLLDRFLDILQDLHGEDLKETVQECYELSAEYEAKHDPKKLEELGNVLTSLDPGDSIVIAKAFSHMLNLANLAEEVQIAYRRRQKLKKKGDFGDESNATTESDIEETFKKLVGDLKKSPQEVFDAIKNQTVDLVLTAHPTQSVRRSLLQKHGRIRDCLAQLYAKDITPDDKQELDEALQREIQAAFRTDEIRRTPPTPQDEMRAGMSYFHETIWKGVPKFLRRVDTALKNIGINERVPYNAPLIQFSSWMGGDRDGNPRVTPEVTRDVCLLARMMAANLYYSQIEDLMFELSMWRCNEELRVRADDLQRSSRRDEKHYIEFWKQVPPNEPYRVILGDVRDKLYQTRERARQLLGHGYSEIPEEATYTNIEQFLEPLELCYRSLCACGDLSIADGSLLDFLRQVSTFGLSLVRLDIRQESDRHTDVLDAITQHLEIGSYRDWSEERRQEWLLSELSGKRPLFGPDLPKTEEIADVLDTFHVIAELPADCFGAYIISMATAPSDVLAVELLQRECRVRQPLRVVPLFEKLADLDAAPAAVARLFSIEWYRNRINGKQEVMIGYSDSGKDAGRLSAAWQLYKAQEELIQVAKEFDVKLTMFHGRGGTVGRGGGPAHLAILSQPPETIHGSLRVTVQGEVIEQSFGEEHLCFRTLQRFTAATLEHGMHPPVSPKPEWRALMDEIAVVATEKYRSIVFKEPRFVEYFRLATPELEYGRMNIGSRPSKRKPSGGIESLRAIPWIFAWTQTRFHLPVWLGFGAAFKYAIEKDIKNLRMLQEMYNAWPFFRVTIDLVEMVFAKGDPGIAALFDKLLVSEDLWSFGELLRSKYEETKSLLLQIAGHKDLLEGDPYLKQRLRLRDSYITTLNVCQAYTLKRIRDPDYSVTPRPHISKEYMEAKPATELVNLNPTSEYAPGLEDTLILTMKGIAAGMQNTG</sequence>
<comment type="function">
    <text>Through the carboxylation of phosphoenolpyruvate (PEP) it forms oxaloacetate, a four-carbon dicarboxylic acid source for the tricarboxylic acid cycle.</text>
</comment>
<comment type="catalytic activity">
    <reaction>
        <text>oxaloacetate + phosphate = phosphoenolpyruvate + hydrogencarbonate</text>
        <dbReference type="Rhea" id="RHEA:28370"/>
        <dbReference type="ChEBI" id="CHEBI:16452"/>
        <dbReference type="ChEBI" id="CHEBI:17544"/>
        <dbReference type="ChEBI" id="CHEBI:43474"/>
        <dbReference type="ChEBI" id="CHEBI:58702"/>
        <dbReference type="EC" id="4.1.1.31"/>
    </reaction>
</comment>
<comment type="cofactor">
    <cofactor evidence="1">
        <name>Mg(2+)</name>
        <dbReference type="ChEBI" id="CHEBI:18420"/>
    </cofactor>
</comment>
<comment type="activity regulation">
    <text evidence="1">By light-reversible phosphorylation.</text>
</comment>
<comment type="pathway">
    <text>Photosynthesis; C3 acid pathway.</text>
</comment>
<comment type="subunit">
    <text>Homotetramer.</text>
</comment>
<comment type="subcellular location">
    <subcellularLocation>
        <location>Cytoplasm</location>
    </subcellularLocation>
</comment>
<comment type="similarity">
    <text evidence="2">Belongs to the PEPCase type 1 family.</text>
</comment>
<name>CAPP_SOLTU</name>